<keyword id="KW-0067">ATP-binding</keyword>
<keyword id="KW-0963">Cytoplasm</keyword>
<keyword id="KW-0418">Kinase</keyword>
<keyword id="KW-0545">Nucleotide biosynthesis</keyword>
<keyword id="KW-0547">Nucleotide-binding</keyword>
<keyword id="KW-0808">Transferase</keyword>
<evidence type="ECO:0000255" key="1">
    <source>
        <dbReference type="HAMAP-Rule" id="MF_00235"/>
    </source>
</evidence>
<dbReference type="EC" id="2.7.4.3" evidence="1"/>
<dbReference type="EMBL" id="CP000738">
    <property type="protein sequence ID" value="ABR59860.1"/>
    <property type="molecule type" value="Genomic_DNA"/>
</dbReference>
<dbReference type="RefSeq" id="WP_011975186.1">
    <property type="nucleotide sequence ID" value="NC_009636.1"/>
</dbReference>
<dbReference type="RefSeq" id="YP_001326695.1">
    <property type="nucleotide sequence ID" value="NC_009636.1"/>
</dbReference>
<dbReference type="SMR" id="A6U880"/>
<dbReference type="STRING" id="366394.Smed_1007"/>
<dbReference type="KEGG" id="smd:Smed_1007"/>
<dbReference type="PATRIC" id="fig|366394.8.peg.4128"/>
<dbReference type="eggNOG" id="COG0563">
    <property type="taxonomic scope" value="Bacteria"/>
</dbReference>
<dbReference type="HOGENOM" id="CLU_032354_4_1_5"/>
<dbReference type="OrthoDB" id="9805030at2"/>
<dbReference type="UniPathway" id="UPA00588">
    <property type="reaction ID" value="UER00649"/>
</dbReference>
<dbReference type="Proteomes" id="UP000001108">
    <property type="component" value="Chromosome"/>
</dbReference>
<dbReference type="GO" id="GO:0005737">
    <property type="term" value="C:cytoplasm"/>
    <property type="evidence" value="ECO:0007669"/>
    <property type="project" value="UniProtKB-SubCell"/>
</dbReference>
<dbReference type="GO" id="GO:0004017">
    <property type="term" value="F:adenylate kinase activity"/>
    <property type="evidence" value="ECO:0007669"/>
    <property type="project" value="UniProtKB-UniRule"/>
</dbReference>
<dbReference type="GO" id="GO:0005524">
    <property type="term" value="F:ATP binding"/>
    <property type="evidence" value="ECO:0007669"/>
    <property type="project" value="UniProtKB-UniRule"/>
</dbReference>
<dbReference type="GO" id="GO:0044209">
    <property type="term" value="P:AMP salvage"/>
    <property type="evidence" value="ECO:0007669"/>
    <property type="project" value="UniProtKB-UniRule"/>
</dbReference>
<dbReference type="CDD" id="cd01428">
    <property type="entry name" value="ADK"/>
    <property type="match status" value="1"/>
</dbReference>
<dbReference type="Gene3D" id="3.40.50.300">
    <property type="entry name" value="P-loop containing nucleotide triphosphate hydrolases"/>
    <property type="match status" value="1"/>
</dbReference>
<dbReference type="HAMAP" id="MF_00235">
    <property type="entry name" value="Adenylate_kinase_Adk"/>
    <property type="match status" value="1"/>
</dbReference>
<dbReference type="InterPro" id="IPR006259">
    <property type="entry name" value="Adenyl_kin_sub"/>
</dbReference>
<dbReference type="InterPro" id="IPR000850">
    <property type="entry name" value="Adenylat/UMP-CMP_kin"/>
</dbReference>
<dbReference type="InterPro" id="IPR033690">
    <property type="entry name" value="Adenylat_kinase_CS"/>
</dbReference>
<dbReference type="InterPro" id="IPR027417">
    <property type="entry name" value="P-loop_NTPase"/>
</dbReference>
<dbReference type="NCBIfam" id="TIGR01351">
    <property type="entry name" value="adk"/>
    <property type="match status" value="1"/>
</dbReference>
<dbReference type="NCBIfam" id="NF001381">
    <property type="entry name" value="PRK00279.1-3"/>
    <property type="match status" value="1"/>
</dbReference>
<dbReference type="NCBIfam" id="NF011100">
    <property type="entry name" value="PRK14527.1"/>
    <property type="match status" value="1"/>
</dbReference>
<dbReference type="NCBIfam" id="NF011101">
    <property type="entry name" value="PRK14528.1"/>
    <property type="match status" value="1"/>
</dbReference>
<dbReference type="NCBIfam" id="NF011104">
    <property type="entry name" value="PRK14531.1"/>
    <property type="match status" value="1"/>
</dbReference>
<dbReference type="NCBIfam" id="NF011105">
    <property type="entry name" value="PRK14532.1"/>
    <property type="match status" value="1"/>
</dbReference>
<dbReference type="PANTHER" id="PTHR23359">
    <property type="entry name" value="NUCLEOTIDE KINASE"/>
    <property type="match status" value="1"/>
</dbReference>
<dbReference type="Pfam" id="PF00406">
    <property type="entry name" value="ADK"/>
    <property type="match status" value="1"/>
</dbReference>
<dbReference type="PRINTS" id="PR00094">
    <property type="entry name" value="ADENYLTKNASE"/>
</dbReference>
<dbReference type="SUPFAM" id="SSF52540">
    <property type="entry name" value="P-loop containing nucleoside triphosphate hydrolases"/>
    <property type="match status" value="1"/>
</dbReference>
<dbReference type="PROSITE" id="PS00113">
    <property type="entry name" value="ADENYLATE_KINASE"/>
    <property type="match status" value="1"/>
</dbReference>
<sequence>MRLIFLGPPGAGKGTQAKHLTERYGIPQLSTGDMLRAAVAQATEVGKRAKAVMDAGQLVSDEIVNEIVSDRIDAPDCAKGFILDGYPRTVPQAVALDRMLEEKNLKLDAVIELKVDEAALVRRMENRVAETVAAGGTVRSDDNPEAFRRRLQEYREKTAPLSEHYARTGRLKTVDGMADVKTVTAEIEKILA</sequence>
<accession>A6U880</accession>
<organism>
    <name type="scientific">Sinorhizobium medicae (strain WSM419)</name>
    <name type="common">Ensifer medicae</name>
    <dbReference type="NCBI Taxonomy" id="366394"/>
    <lineage>
        <taxon>Bacteria</taxon>
        <taxon>Pseudomonadati</taxon>
        <taxon>Pseudomonadota</taxon>
        <taxon>Alphaproteobacteria</taxon>
        <taxon>Hyphomicrobiales</taxon>
        <taxon>Rhizobiaceae</taxon>
        <taxon>Sinorhizobium/Ensifer group</taxon>
        <taxon>Sinorhizobium</taxon>
    </lineage>
</organism>
<protein>
    <recommendedName>
        <fullName evidence="1">Adenylate kinase</fullName>
        <shortName evidence="1">AK</shortName>
        <ecNumber evidence="1">2.7.4.3</ecNumber>
    </recommendedName>
    <alternativeName>
        <fullName evidence="1">ATP-AMP transphosphorylase</fullName>
    </alternativeName>
    <alternativeName>
        <fullName evidence="1">ATP:AMP phosphotransferase</fullName>
    </alternativeName>
    <alternativeName>
        <fullName evidence="1">Adenylate monophosphate kinase</fullName>
    </alternativeName>
</protein>
<reference key="1">
    <citation type="submission" date="2007-06" db="EMBL/GenBank/DDBJ databases">
        <title>Complete sequence of Sinorhizobium medicae WSM419 chromosome.</title>
        <authorList>
            <consortium name="US DOE Joint Genome Institute"/>
            <person name="Copeland A."/>
            <person name="Lucas S."/>
            <person name="Lapidus A."/>
            <person name="Barry K."/>
            <person name="Glavina del Rio T."/>
            <person name="Dalin E."/>
            <person name="Tice H."/>
            <person name="Pitluck S."/>
            <person name="Chain P."/>
            <person name="Malfatti S."/>
            <person name="Shin M."/>
            <person name="Vergez L."/>
            <person name="Schmutz J."/>
            <person name="Larimer F."/>
            <person name="Land M."/>
            <person name="Hauser L."/>
            <person name="Kyrpides N."/>
            <person name="Mikhailova N."/>
            <person name="Reeve W.G."/>
            <person name="Richardson P."/>
        </authorList>
    </citation>
    <scope>NUCLEOTIDE SEQUENCE [LARGE SCALE GENOMIC DNA]</scope>
    <source>
        <strain>WSM419</strain>
    </source>
</reference>
<feature type="chain" id="PRO_1000058909" description="Adenylate kinase">
    <location>
        <begin position="1"/>
        <end position="192"/>
    </location>
</feature>
<feature type="region of interest" description="NMP" evidence="1">
    <location>
        <begin position="30"/>
        <end position="59"/>
    </location>
</feature>
<feature type="region of interest" description="LID" evidence="1">
    <location>
        <begin position="126"/>
        <end position="142"/>
    </location>
</feature>
<feature type="binding site" evidence="1">
    <location>
        <begin position="10"/>
        <end position="15"/>
    </location>
    <ligand>
        <name>ATP</name>
        <dbReference type="ChEBI" id="CHEBI:30616"/>
    </ligand>
</feature>
<feature type="binding site" evidence="1">
    <location>
        <position position="31"/>
    </location>
    <ligand>
        <name>AMP</name>
        <dbReference type="ChEBI" id="CHEBI:456215"/>
    </ligand>
</feature>
<feature type="binding site" evidence="1">
    <location>
        <position position="36"/>
    </location>
    <ligand>
        <name>AMP</name>
        <dbReference type="ChEBI" id="CHEBI:456215"/>
    </ligand>
</feature>
<feature type="binding site" evidence="1">
    <location>
        <begin position="57"/>
        <end position="59"/>
    </location>
    <ligand>
        <name>AMP</name>
        <dbReference type="ChEBI" id="CHEBI:456215"/>
    </ligand>
</feature>
<feature type="binding site" evidence="1">
    <location>
        <begin position="85"/>
        <end position="88"/>
    </location>
    <ligand>
        <name>AMP</name>
        <dbReference type="ChEBI" id="CHEBI:456215"/>
    </ligand>
</feature>
<feature type="binding site" evidence="1">
    <location>
        <position position="92"/>
    </location>
    <ligand>
        <name>AMP</name>
        <dbReference type="ChEBI" id="CHEBI:456215"/>
    </ligand>
</feature>
<feature type="binding site" evidence="1">
    <location>
        <position position="127"/>
    </location>
    <ligand>
        <name>ATP</name>
        <dbReference type="ChEBI" id="CHEBI:30616"/>
    </ligand>
</feature>
<feature type="binding site" evidence="1">
    <location>
        <position position="139"/>
    </location>
    <ligand>
        <name>AMP</name>
        <dbReference type="ChEBI" id="CHEBI:456215"/>
    </ligand>
</feature>
<feature type="binding site" evidence="1">
    <location>
        <position position="150"/>
    </location>
    <ligand>
        <name>AMP</name>
        <dbReference type="ChEBI" id="CHEBI:456215"/>
    </ligand>
</feature>
<feature type="binding site" evidence="1">
    <location>
        <position position="178"/>
    </location>
    <ligand>
        <name>ATP</name>
        <dbReference type="ChEBI" id="CHEBI:30616"/>
    </ligand>
</feature>
<gene>
    <name evidence="1" type="primary">adk</name>
    <name type="ordered locus">Smed_1007</name>
</gene>
<proteinExistence type="inferred from homology"/>
<name>KAD_SINMW</name>
<comment type="function">
    <text evidence="1">Catalyzes the reversible transfer of the terminal phosphate group between ATP and AMP. Plays an important role in cellular energy homeostasis and in adenine nucleotide metabolism.</text>
</comment>
<comment type="catalytic activity">
    <reaction evidence="1">
        <text>AMP + ATP = 2 ADP</text>
        <dbReference type="Rhea" id="RHEA:12973"/>
        <dbReference type="ChEBI" id="CHEBI:30616"/>
        <dbReference type="ChEBI" id="CHEBI:456215"/>
        <dbReference type="ChEBI" id="CHEBI:456216"/>
        <dbReference type="EC" id="2.7.4.3"/>
    </reaction>
</comment>
<comment type="pathway">
    <text evidence="1">Purine metabolism; AMP biosynthesis via salvage pathway; AMP from ADP: step 1/1.</text>
</comment>
<comment type="subunit">
    <text evidence="1">Monomer.</text>
</comment>
<comment type="subcellular location">
    <subcellularLocation>
        <location evidence="1">Cytoplasm</location>
    </subcellularLocation>
</comment>
<comment type="domain">
    <text evidence="1">Consists of three domains, a large central CORE domain and two small peripheral domains, NMPbind and LID, which undergo movements during catalysis. The LID domain closes over the site of phosphoryl transfer upon ATP binding. Assembling and dissambling the active center during each catalytic cycle provides an effective means to prevent ATP hydrolysis.</text>
</comment>
<comment type="similarity">
    <text evidence="1">Belongs to the adenylate kinase family.</text>
</comment>